<proteinExistence type="inferred from homology"/>
<feature type="initiator methionine" description="Removed" evidence="1">
    <location>
        <position position="1"/>
    </location>
</feature>
<feature type="chain" id="PRO_0000076802" description="3-isopropylmalate dehydratase large subunit">
    <location>
        <begin position="2"/>
        <end position="466"/>
    </location>
</feature>
<feature type="binding site" evidence="2">
    <location>
        <position position="347"/>
    </location>
    <ligand>
        <name>[4Fe-4S] cluster</name>
        <dbReference type="ChEBI" id="CHEBI:49883"/>
    </ligand>
</feature>
<feature type="binding site" evidence="2">
    <location>
        <position position="407"/>
    </location>
    <ligand>
        <name>[4Fe-4S] cluster</name>
        <dbReference type="ChEBI" id="CHEBI:49883"/>
    </ligand>
</feature>
<feature type="binding site" evidence="2">
    <location>
        <position position="410"/>
    </location>
    <ligand>
        <name>[4Fe-4S] cluster</name>
        <dbReference type="ChEBI" id="CHEBI:49883"/>
    </ligand>
</feature>
<accession>Q8Z9I2</accession>
<reference key="1">
    <citation type="journal article" date="2001" name="Nature">
        <title>Complete genome sequence of a multiple drug resistant Salmonella enterica serovar Typhi CT18.</title>
        <authorList>
            <person name="Parkhill J."/>
            <person name="Dougan G."/>
            <person name="James K.D."/>
            <person name="Thomson N.R."/>
            <person name="Pickard D."/>
            <person name="Wain J."/>
            <person name="Churcher C.M."/>
            <person name="Mungall K.L."/>
            <person name="Bentley S.D."/>
            <person name="Holden M.T.G."/>
            <person name="Sebaihia M."/>
            <person name="Baker S."/>
            <person name="Basham D."/>
            <person name="Brooks K."/>
            <person name="Chillingworth T."/>
            <person name="Connerton P."/>
            <person name="Cronin A."/>
            <person name="Davis P."/>
            <person name="Davies R.M."/>
            <person name="Dowd L."/>
            <person name="White N."/>
            <person name="Farrar J."/>
            <person name="Feltwell T."/>
            <person name="Hamlin N."/>
            <person name="Haque A."/>
            <person name="Hien T.T."/>
            <person name="Holroyd S."/>
            <person name="Jagels K."/>
            <person name="Krogh A."/>
            <person name="Larsen T.S."/>
            <person name="Leather S."/>
            <person name="Moule S."/>
            <person name="O'Gaora P."/>
            <person name="Parry C."/>
            <person name="Quail M.A."/>
            <person name="Rutherford K.M."/>
            <person name="Simmonds M."/>
            <person name="Skelton J."/>
            <person name="Stevens K."/>
            <person name="Whitehead S."/>
            <person name="Barrell B.G."/>
        </authorList>
    </citation>
    <scope>NUCLEOTIDE SEQUENCE [LARGE SCALE GENOMIC DNA]</scope>
    <source>
        <strain>CT18</strain>
    </source>
</reference>
<reference key="2">
    <citation type="journal article" date="2003" name="J. Bacteriol.">
        <title>Comparative genomics of Salmonella enterica serovar Typhi strains Ty2 and CT18.</title>
        <authorList>
            <person name="Deng W."/>
            <person name="Liou S.-R."/>
            <person name="Plunkett G. III"/>
            <person name="Mayhew G.F."/>
            <person name="Rose D.J."/>
            <person name="Burland V."/>
            <person name="Kodoyianni V."/>
            <person name="Schwartz D.C."/>
            <person name="Blattner F.R."/>
        </authorList>
    </citation>
    <scope>NUCLEOTIDE SEQUENCE [LARGE SCALE GENOMIC DNA]</scope>
    <source>
        <strain>ATCC 700931 / Ty2</strain>
    </source>
</reference>
<gene>
    <name evidence="2" type="primary">leuC</name>
    <name type="ordered locus">STY0130</name>
    <name type="ordered locus">t0115</name>
</gene>
<name>LEUC_SALTI</name>
<keyword id="KW-0004">4Fe-4S</keyword>
<keyword id="KW-0028">Amino-acid biosynthesis</keyword>
<keyword id="KW-0100">Branched-chain amino acid biosynthesis</keyword>
<keyword id="KW-0408">Iron</keyword>
<keyword id="KW-0411">Iron-sulfur</keyword>
<keyword id="KW-0432">Leucine biosynthesis</keyword>
<keyword id="KW-0456">Lyase</keyword>
<keyword id="KW-0479">Metal-binding</keyword>
<comment type="function">
    <text evidence="2">Catalyzes the isomerization between 2-isopropylmalate and 3-isopropylmalate, via the formation of 2-isopropylmaleate.</text>
</comment>
<comment type="catalytic activity">
    <reaction evidence="2">
        <text>(2R,3S)-3-isopropylmalate = (2S)-2-isopropylmalate</text>
        <dbReference type="Rhea" id="RHEA:32287"/>
        <dbReference type="ChEBI" id="CHEBI:1178"/>
        <dbReference type="ChEBI" id="CHEBI:35121"/>
        <dbReference type="EC" id="4.2.1.33"/>
    </reaction>
</comment>
<comment type="cofactor">
    <cofactor evidence="2">
        <name>[4Fe-4S] cluster</name>
        <dbReference type="ChEBI" id="CHEBI:49883"/>
    </cofactor>
    <text evidence="2">Binds 1 [4Fe-4S] cluster per subunit.</text>
</comment>
<comment type="pathway">
    <text evidence="2">Amino-acid biosynthesis; L-leucine biosynthesis; L-leucine from 3-methyl-2-oxobutanoate: step 2/4.</text>
</comment>
<comment type="subunit">
    <text evidence="2">Heterodimer of LeuC and LeuD.</text>
</comment>
<comment type="similarity">
    <text evidence="2">Belongs to the aconitase/IPM isomerase family. LeuC type 1 subfamily.</text>
</comment>
<evidence type="ECO:0000250" key="1"/>
<evidence type="ECO:0000255" key="2">
    <source>
        <dbReference type="HAMAP-Rule" id="MF_01026"/>
    </source>
</evidence>
<protein>
    <recommendedName>
        <fullName evidence="2">3-isopropylmalate dehydratase large subunit</fullName>
        <ecNumber evidence="2">4.2.1.33</ecNumber>
    </recommendedName>
    <alternativeName>
        <fullName evidence="2">Alpha-IPM isomerase</fullName>
        <shortName evidence="2">IPMI</shortName>
    </alternativeName>
    <alternativeName>
        <fullName evidence="2">Isopropylmalate isomerase</fullName>
    </alternativeName>
</protein>
<dbReference type="EC" id="4.2.1.33" evidence="2"/>
<dbReference type="EMBL" id="AL513382">
    <property type="protein sequence ID" value="CAD01268.1"/>
    <property type="molecule type" value="Genomic_DNA"/>
</dbReference>
<dbReference type="EMBL" id="AE014613">
    <property type="protein sequence ID" value="AAO67847.1"/>
    <property type="molecule type" value="Genomic_DNA"/>
</dbReference>
<dbReference type="RefSeq" id="NP_454723.1">
    <property type="nucleotide sequence ID" value="NC_003198.1"/>
</dbReference>
<dbReference type="RefSeq" id="WP_001140632.1">
    <property type="nucleotide sequence ID" value="NZ_WSUR01000009.1"/>
</dbReference>
<dbReference type="SMR" id="Q8Z9I2"/>
<dbReference type="STRING" id="220341.gene:17584170"/>
<dbReference type="KEGG" id="stt:t0115"/>
<dbReference type="KEGG" id="sty:STY0130"/>
<dbReference type="PATRIC" id="fig|220341.7.peg.131"/>
<dbReference type="eggNOG" id="COG0065">
    <property type="taxonomic scope" value="Bacteria"/>
</dbReference>
<dbReference type="HOGENOM" id="CLU_006714_3_4_6"/>
<dbReference type="OMA" id="WDDHVVR"/>
<dbReference type="OrthoDB" id="9802769at2"/>
<dbReference type="UniPathway" id="UPA00048">
    <property type="reaction ID" value="UER00071"/>
</dbReference>
<dbReference type="Proteomes" id="UP000000541">
    <property type="component" value="Chromosome"/>
</dbReference>
<dbReference type="Proteomes" id="UP000002670">
    <property type="component" value="Chromosome"/>
</dbReference>
<dbReference type="GO" id="GO:0003861">
    <property type="term" value="F:3-isopropylmalate dehydratase activity"/>
    <property type="evidence" value="ECO:0007669"/>
    <property type="project" value="UniProtKB-UniRule"/>
</dbReference>
<dbReference type="GO" id="GO:0051539">
    <property type="term" value="F:4 iron, 4 sulfur cluster binding"/>
    <property type="evidence" value="ECO:0007669"/>
    <property type="project" value="UniProtKB-KW"/>
</dbReference>
<dbReference type="GO" id="GO:0046872">
    <property type="term" value="F:metal ion binding"/>
    <property type="evidence" value="ECO:0007669"/>
    <property type="project" value="UniProtKB-KW"/>
</dbReference>
<dbReference type="GO" id="GO:0009098">
    <property type="term" value="P:L-leucine biosynthetic process"/>
    <property type="evidence" value="ECO:0007669"/>
    <property type="project" value="UniProtKB-UniRule"/>
</dbReference>
<dbReference type="CDD" id="cd01583">
    <property type="entry name" value="IPMI"/>
    <property type="match status" value="1"/>
</dbReference>
<dbReference type="FunFam" id="3.30.499.10:FF:000006">
    <property type="entry name" value="3-isopropylmalate dehydratase large subunit"/>
    <property type="match status" value="1"/>
</dbReference>
<dbReference type="FunFam" id="3.30.499.10:FF:000007">
    <property type="entry name" value="3-isopropylmalate dehydratase large subunit"/>
    <property type="match status" value="1"/>
</dbReference>
<dbReference type="Gene3D" id="3.30.499.10">
    <property type="entry name" value="Aconitase, domain 3"/>
    <property type="match status" value="2"/>
</dbReference>
<dbReference type="HAMAP" id="MF_01026">
    <property type="entry name" value="LeuC_type1"/>
    <property type="match status" value="1"/>
</dbReference>
<dbReference type="InterPro" id="IPR004430">
    <property type="entry name" value="3-IsopropMal_deHydase_lsu"/>
</dbReference>
<dbReference type="InterPro" id="IPR015931">
    <property type="entry name" value="Acnase/IPM_dHydase_lsu_aba_1/3"/>
</dbReference>
<dbReference type="InterPro" id="IPR001030">
    <property type="entry name" value="Acoase/IPM_deHydtase_lsu_aba"/>
</dbReference>
<dbReference type="InterPro" id="IPR018136">
    <property type="entry name" value="Aconitase_4Fe-4S_BS"/>
</dbReference>
<dbReference type="InterPro" id="IPR036008">
    <property type="entry name" value="Aconitase_4Fe-4S_dom"/>
</dbReference>
<dbReference type="InterPro" id="IPR050067">
    <property type="entry name" value="IPM_dehydratase_rel_enz"/>
</dbReference>
<dbReference type="InterPro" id="IPR033941">
    <property type="entry name" value="IPMI_cat"/>
</dbReference>
<dbReference type="NCBIfam" id="TIGR00170">
    <property type="entry name" value="leuC"/>
    <property type="match status" value="1"/>
</dbReference>
<dbReference type="NCBIfam" id="NF004016">
    <property type="entry name" value="PRK05478.1"/>
    <property type="match status" value="1"/>
</dbReference>
<dbReference type="NCBIfam" id="NF009116">
    <property type="entry name" value="PRK12466.1"/>
    <property type="match status" value="1"/>
</dbReference>
<dbReference type="PANTHER" id="PTHR43822:SF9">
    <property type="entry name" value="3-ISOPROPYLMALATE DEHYDRATASE"/>
    <property type="match status" value="1"/>
</dbReference>
<dbReference type="PANTHER" id="PTHR43822">
    <property type="entry name" value="HOMOACONITASE, MITOCHONDRIAL-RELATED"/>
    <property type="match status" value="1"/>
</dbReference>
<dbReference type="Pfam" id="PF00330">
    <property type="entry name" value="Aconitase"/>
    <property type="match status" value="1"/>
</dbReference>
<dbReference type="PRINTS" id="PR00415">
    <property type="entry name" value="ACONITASE"/>
</dbReference>
<dbReference type="SUPFAM" id="SSF53732">
    <property type="entry name" value="Aconitase iron-sulfur domain"/>
    <property type="match status" value="1"/>
</dbReference>
<dbReference type="PROSITE" id="PS00450">
    <property type="entry name" value="ACONITASE_1"/>
    <property type="match status" value="1"/>
</dbReference>
<dbReference type="PROSITE" id="PS01244">
    <property type="entry name" value="ACONITASE_2"/>
    <property type="match status" value="1"/>
</dbReference>
<sequence length="466" mass="49816">MAKTLYEKLFDAHVVFEAPNETPLLYIDRHLVHEVTSPQAFDGLRAHHRPVRQPGKTFATMDHNVSTQTKDINASGEMARIQMQELIKNCNEFGVELYDLNHPYQGIVHVMGPEQGVTLPGMTIVCGDSHTATHGAFGALAFGIGTSEVEHVLATQTLKQGRAKTMKIEVTGNAAPGITAKDIVLAIIGKTGSAGGTGHVVEFCGDAIRALSMEGRMTLCNMAIEMGAKAGLVAPDETTFNYVKGRLHAPKGRDFDEAVEYWKTLKTDDGATFDTVVTLRAEEIAPQVTWGTNPGQVISVTDIIPDPASFSDPVERASAEKALAYMGLQPGVPLTDVAIDKVFIGSCTNSRIEDLRAAAEVAKGRKVAPGVQALVVPGSGPVKAQAEAEGLDKIFIEAGFEWRLPGCSMCLAMNNDRLNPGERCASTSNRNFEGRQGRGGRTHLVSPAMAAAAAVTGHFADIRSIK</sequence>
<organism>
    <name type="scientific">Salmonella typhi</name>
    <dbReference type="NCBI Taxonomy" id="90370"/>
    <lineage>
        <taxon>Bacteria</taxon>
        <taxon>Pseudomonadati</taxon>
        <taxon>Pseudomonadota</taxon>
        <taxon>Gammaproteobacteria</taxon>
        <taxon>Enterobacterales</taxon>
        <taxon>Enterobacteriaceae</taxon>
        <taxon>Salmonella</taxon>
    </lineage>
</organism>